<feature type="signal peptide" evidence="2">
    <location>
        <begin position="1"/>
        <end position="28"/>
    </location>
</feature>
<feature type="propeptide" id="PRO_0000457246" description="Removed in mature form" evidence="1">
    <location>
        <begin position="29"/>
        <end status="unknown"/>
    </location>
</feature>
<feature type="peptide" id="PRO_0000457247" description="Serine rich endogenous peptide 17" evidence="1">
    <location>
        <begin status="unknown"/>
        <end position="87"/>
    </location>
</feature>
<feature type="region of interest" description="Disordered" evidence="3">
    <location>
        <begin position="32"/>
        <end position="87"/>
    </location>
</feature>
<feature type="short sequence motif" description="SCOOP motif" evidence="6">
    <location>
        <begin position="51"/>
        <end position="71"/>
    </location>
</feature>
<feature type="short sequence motif" description="SxS motif essential for MIK2 binding" evidence="1">
    <location>
        <begin position="63"/>
        <end position="65"/>
    </location>
</feature>
<feature type="compositionally biased region" description="Basic and acidic residues" evidence="3">
    <location>
        <begin position="40"/>
        <end position="49"/>
    </location>
</feature>
<feature type="compositionally biased region" description="Basic residues" evidence="3">
    <location>
        <begin position="58"/>
        <end position="69"/>
    </location>
</feature>
<feature type="compositionally biased region" description="Pro residues" evidence="3">
    <location>
        <begin position="77"/>
        <end position="87"/>
    </location>
</feature>
<evidence type="ECO:0000250" key="1">
    <source>
        <dbReference type="UniProtKB" id="B3H7I1"/>
    </source>
</evidence>
<evidence type="ECO:0000255" key="2"/>
<evidence type="ECO:0000256" key="3">
    <source>
        <dbReference type="SAM" id="MobiDB-lite"/>
    </source>
</evidence>
<evidence type="ECO:0000303" key="4">
    <source>
    </source>
</evidence>
<evidence type="ECO:0000305" key="5"/>
<evidence type="ECO:0000305" key="6">
    <source>
    </source>
</evidence>
<evidence type="ECO:0000312" key="7">
    <source>
        <dbReference type="Araport" id="AT1G65481"/>
    </source>
</evidence>
<evidence type="ECO:0000312" key="8">
    <source>
        <dbReference type="EMBL" id="AC001229"/>
    </source>
</evidence>
<protein>
    <recommendedName>
        <fullName evidence="4">Serine rich endogenous peptide 17</fullName>
        <shortName evidence="4">AtSCOOP17</shortName>
    </recommendedName>
    <alternativeName>
        <fullName evidence="4">Phytocytokine SCOOP17</fullName>
    </alternativeName>
    <alternativeName>
        <fullName evidence="4">Precursor of serine rich endogenous peptide phytocytokine 17</fullName>
    </alternativeName>
</protein>
<dbReference type="EMBL" id="AC001229">
    <property type="status" value="NOT_ANNOTATED_CDS"/>
    <property type="molecule type" value="Genomic_DNA"/>
</dbReference>
<dbReference type="EMBL" id="CP002684">
    <property type="protein sequence ID" value="AEE34382.1"/>
    <property type="molecule type" value="Genomic_DNA"/>
</dbReference>
<dbReference type="RefSeq" id="NP_001185321.1">
    <property type="nucleotide sequence ID" value="NM_001198392.2"/>
</dbReference>
<dbReference type="SMR" id="F4IBG4"/>
<dbReference type="PaxDb" id="3702-AT1G65481.1"/>
<dbReference type="PRIDE" id="F4IBG4"/>
<dbReference type="EnsemblPlants" id="AT1G65481.1">
    <property type="protein sequence ID" value="AT1G65481.1"/>
    <property type="gene ID" value="AT1G65481"/>
</dbReference>
<dbReference type="GeneID" id="6241153"/>
<dbReference type="Gramene" id="AT1G65481.1">
    <property type="protein sequence ID" value="AT1G65481.1"/>
    <property type="gene ID" value="AT1G65481"/>
</dbReference>
<dbReference type="KEGG" id="ath:AT1G65481"/>
<dbReference type="Araport" id="AT1G65481"/>
<dbReference type="TAIR" id="AT1G65481"/>
<dbReference type="HOGENOM" id="CLU_2486416_0_0_1"/>
<dbReference type="InParanoid" id="F4IBG4"/>
<dbReference type="OMA" id="YKKPPCS"/>
<dbReference type="PRO" id="PR:F4IBG4"/>
<dbReference type="Proteomes" id="UP000006548">
    <property type="component" value="Chromosome 1"/>
</dbReference>
<dbReference type="ExpressionAtlas" id="F4IBG4">
    <property type="expression patterns" value="baseline and differential"/>
</dbReference>
<dbReference type="GO" id="GO:0048046">
    <property type="term" value="C:apoplast"/>
    <property type="evidence" value="ECO:0000250"/>
    <property type="project" value="UniProtKB"/>
</dbReference>
<dbReference type="GO" id="GO:0005886">
    <property type="term" value="C:plasma membrane"/>
    <property type="evidence" value="ECO:0007669"/>
    <property type="project" value="UniProtKB-SubCell"/>
</dbReference>
<dbReference type="GO" id="GO:0030275">
    <property type="term" value="F:LRR domain binding"/>
    <property type="evidence" value="ECO:0000250"/>
    <property type="project" value="UniProtKB"/>
</dbReference>
<dbReference type="GO" id="GO:0033612">
    <property type="term" value="F:receptor serine/threonine kinase binding"/>
    <property type="evidence" value="ECO:0000250"/>
    <property type="project" value="UniProtKB"/>
</dbReference>
<reference key="1">
    <citation type="journal article" date="2000" name="Nature">
        <title>Sequence and analysis of chromosome 1 of the plant Arabidopsis thaliana.</title>
        <authorList>
            <person name="Theologis A."/>
            <person name="Ecker J.R."/>
            <person name="Palm C.J."/>
            <person name="Federspiel N.A."/>
            <person name="Kaul S."/>
            <person name="White O."/>
            <person name="Alonso J."/>
            <person name="Altafi H."/>
            <person name="Araujo R."/>
            <person name="Bowman C.L."/>
            <person name="Brooks S.Y."/>
            <person name="Buehler E."/>
            <person name="Chan A."/>
            <person name="Chao Q."/>
            <person name="Chen H."/>
            <person name="Cheuk R.F."/>
            <person name="Chin C.W."/>
            <person name="Chung M.K."/>
            <person name="Conn L."/>
            <person name="Conway A.B."/>
            <person name="Conway A.R."/>
            <person name="Creasy T.H."/>
            <person name="Dewar K."/>
            <person name="Dunn P."/>
            <person name="Etgu P."/>
            <person name="Feldblyum T.V."/>
            <person name="Feng J.-D."/>
            <person name="Fong B."/>
            <person name="Fujii C.Y."/>
            <person name="Gill J.E."/>
            <person name="Goldsmith A.D."/>
            <person name="Haas B."/>
            <person name="Hansen N.F."/>
            <person name="Hughes B."/>
            <person name="Huizar L."/>
            <person name="Hunter J.L."/>
            <person name="Jenkins J."/>
            <person name="Johnson-Hopson C."/>
            <person name="Khan S."/>
            <person name="Khaykin E."/>
            <person name="Kim C.J."/>
            <person name="Koo H.L."/>
            <person name="Kremenetskaia I."/>
            <person name="Kurtz D.B."/>
            <person name="Kwan A."/>
            <person name="Lam B."/>
            <person name="Langin-Hooper S."/>
            <person name="Lee A."/>
            <person name="Lee J.M."/>
            <person name="Lenz C.A."/>
            <person name="Li J.H."/>
            <person name="Li Y.-P."/>
            <person name="Lin X."/>
            <person name="Liu S.X."/>
            <person name="Liu Z.A."/>
            <person name="Luros J.S."/>
            <person name="Maiti R."/>
            <person name="Marziali A."/>
            <person name="Militscher J."/>
            <person name="Miranda M."/>
            <person name="Nguyen M."/>
            <person name="Nierman W.C."/>
            <person name="Osborne B.I."/>
            <person name="Pai G."/>
            <person name="Peterson J."/>
            <person name="Pham P.K."/>
            <person name="Rizzo M."/>
            <person name="Rooney T."/>
            <person name="Rowley D."/>
            <person name="Sakano H."/>
            <person name="Salzberg S.L."/>
            <person name="Schwartz J.R."/>
            <person name="Shinn P."/>
            <person name="Southwick A.M."/>
            <person name="Sun H."/>
            <person name="Tallon L.J."/>
            <person name="Tambunga G."/>
            <person name="Toriumi M.J."/>
            <person name="Town C.D."/>
            <person name="Utterback T."/>
            <person name="Van Aken S."/>
            <person name="Vaysberg M."/>
            <person name="Vysotskaia V.S."/>
            <person name="Walker M."/>
            <person name="Wu D."/>
            <person name="Yu G."/>
            <person name="Fraser C.M."/>
            <person name="Venter J.C."/>
            <person name="Davis R.W."/>
        </authorList>
    </citation>
    <scope>NUCLEOTIDE SEQUENCE [LARGE SCALE GENOMIC DNA]</scope>
    <source>
        <strain>cv. Columbia</strain>
    </source>
</reference>
<reference key="2">
    <citation type="journal article" date="2017" name="Plant J.">
        <title>Araport11: a complete reannotation of the Arabidopsis thaliana reference genome.</title>
        <authorList>
            <person name="Cheng C.Y."/>
            <person name="Krishnakumar V."/>
            <person name="Chan A.P."/>
            <person name="Thibaud-Nissen F."/>
            <person name="Schobel S."/>
            <person name="Town C.D."/>
        </authorList>
    </citation>
    <scope>GENOME REANNOTATION</scope>
    <source>
        <strain>cv. Columbia</strain>
    </source>
</reference>
<reference key="3">
    <citation type="journal article" date="2019" name="J. Exp. Bot.">
        <title>The SCOOP12 peptide regulates defense response and root elongation in Arabidopsis thaliana.</title>
        <authorList>
            <person name="Gully K."/>
            <person name="Pelletier S."/>
            <person name="Guillou M.-C."/>
            <person name="Ferrand M."/>
            <person name="Aligon S."/>
            <person name="Pokotylo I."/>
            <person name="Perrin A."/>
            <person name="Vergne E."/>
            <person name="Fagard M."/>
            <person name="Ruelland E."/>
            <person name="Grappin P."/>
            <person name="Bucher E."/>
            <person name="Renou J.-P."/>
            <person name="Aubourg S."/>
        </authorList>
    </citation>
    <scope>GENE FAMILY</scope>
    <source>
        <strain>cv. Columbia</strain>
        <strain>cv. Wassilewskija</strain>
    </source>
</reference>
<reference key="4">
    <citation type="journal article" date="2021" name="Nat. Commun.">
        <title>The Arabidopsis MIK2 receptor elicits immunity by sensing a conserved signature from phytocytokines and microbes.</title>
        <authorList>
            <person name="Hou S."/>
            <person name="Liu D."/>
            <person name="Huang S."/>
            <person name="Luo D."/>
            <person name="Liu Z."/>
            <person name="Xiang Q."/>
            <person name="Wang P."/>
            <person name="Mu R."/>
            <person name="Han Z."/>
            <person name="Chen S."/>
            <person name="Chai J."/>
            <person name="Shan L."/>
            <person name="He P."/>
        </authorList>
    </citation>
    <scope>GENE FAMILY</scope>
    <scope>NOMENCLATURE</scope>
    <source>
        <strain>cv. Columbia</strain>
    </source>
</reference>
<keyword id="KW-0052">Apoplast</keyword>
<keyword id="KW-1003">Cell membrane</keyword>
<keyword id="KW-0165">Cleavage on pair of basic residues</keyword>
<keyword id="KW-0472">Membrane</keyword>
<keyword id="KW-1185">Reference proteome</keyword>
<keyword id="KW-0964">Secreted</keyword>
<keyword id="KW-0732">Signal</keyword>
<accession>F4IBG4</accession>
<sequence>MTGKAPFFVILIAALLLLSSFFFGEVKAISTKQPKHRKLGNREGDENRSNEIVVQMKARVKRSKSKRGPQKKEPYKKPPCSPPTHPA</sequence>
<gene>
    <name evidence="4" type="primary">PROSCOOP17</name>
    <name evidence="4" type="synonym">SCOOP17</name>
    <name evidence="7" type="ordered locus">At1g65481</name>
    <name evidence="8" type="ORF">F5I14</name>
</gene>
<organism>
    <name type="scientific">Arabidopsis thaliana</name>
    <name type="common">Mouse-ear cress</name>
    <dbReference type="NCBI Taxonomy" id="3702"/>
    <lineage>
        <taxon>Eukaryota</taxon>
        <taxon>Viridiplantae</taxon>
        <taxon>Streptophyta</taxon>
        <taxon>Embryophyta</taxon>
        <taxon>Tracheophyta</taxon>
        <taxon>Spermatophyta</taxon>
        <taxon>Magnoliopsida</taxon>
        <taxon>eudicotyledons</taxon>
        <taxon>Gunneridae</taxon>
        <taxon>Pentapetalae</taxon>
        <taxon>rosids</taxon>
        <taxon>malvids</taxon>
        <taxon>Brassicales</taxon>
        <taxon>Brassicaceae</taxon>
        <taxon>Camelineae</taxon>
        <taxon>Arabidopsis</taxon>
    </lineage>
</organism>
<proteinExistence type="inferred from homology"/>
<name>SOP17_ARATH</name>
<comment type="function">
    <text evidence="1">Brassicaceae-specific phytocytokine (plant endogenous peptide released into the apoplast) perceived by MIK2 in a BAK1/SERK3 and SERK4 coreceptors-dependent manner, that modulates various physiological and antimicrobial processes including growth prevention and reactive oxygen species (ROS) response regulation.</text>
</comment>
<comment type="subunit">
    <text evidence="1">Interacts with MIK2 (via extracellular leucine-rich repeat domain); this interaction triggers the formation of complex between MIK2 and the BAK1/SERK3 and SERK4 coreceptors, and subsequent BAK1 activation by phosphorylation.</text>
</comment>
<comment type="subcellular location">
    <subcellularLocation>
        <location evidence="1">Cell membrane</location>
    </subcellularLocation>
    <subcellularLocation>
        <location evidence="1">Secreted</location>
        <location evidence="1">Extracellular space</location>
        <location evidence="1">Apoplast</location>
    </subcellularLocation>
    <text evidence="1">The precursor of SCOOP17, PROSCOOP17, accumulates at the plasma membrane and is proteolytically cleaved to release the SCOOP17 in the apoplasm.</text>
</comment>
<comment type="similarity">
    <text evidence="5">Belongs to the serine rich endogenous peptide (SCOOP) phytocytokine family.</text>
</comment>